<comment type="function">
    <text evidence="3 4 5">Essential component of the PAM complex, a complex required for the translocation of transit peptide-containing proteins from the inner membrane into the mitochondrial matrix in an ATP-dependent manner. In the complex, it is required to regulate activity of mtHSP70 (SSC1) via its interaction with PAM18/TIM14. May act by positioning PAM18/TIM14 in juxtaposition to mtHSP70 at the translocon to maximize ATPase stimulation.</text>
</comment>
<comment type="subunit">
    <text evidence="3 4 5 6 7 8">Homodimer and heterodimer with PAM18. Homodimerization may not be relevant in vivo, while heterodimerization is essential for activity regulation of mtHSP70. Component of the PAM complex, at least composed of mtHsp70, MGE1, TIM44, PAM16, PAM17 and PAM18. Interacts with MDJ2.</text>
</comment>
<comment type="interaction">
    <interactant intactId="EBI-26019">
        <id>P42949</id>
    </interactant>
    <interactant intactId="EBI-31963">
        <id>Q07914</id>
        <label>PAM18</label>
    </interactant>
    <organismsDiffer>false</organismsDiffer>
    <experiments>6</experiments>
</comment>
<comment type="interaction">
    <interactant intactId="EBI-26019">
        <id>P42949</id>
    </interactant>
    <interactant intactId="EBI-9127">
        <id>P39515</id>
        <label>TIM17</label>
    </interactant>
    <organismsDiffer>false</organismsDiffer>
    <experiments>4</experiments>
</comment>
<comment type="interaction">
    <interactant intactId="EBI-26019">
        <id>P42949</id>
    </interactant>
    <interactant intactId="EBI-9136">
        <id>P32897</id>
        <label>TIM23</label>
    </interactant>
    <organismsDiffer>false</organismsDiffer>
    <experiments>6</experiments>
</comment>
<comment type="interaction">
    <interactant intactId="EBI-26019">
        <id>P42949</id>
    </interactant>
    <interactant intactId="EBI-9141">
        <id>Q01852</id>
        <label>TIM44</label>
    </interactant>
    <organismsDiffer>false</organismsDiffer>
    <experiments>3</experiments>
</comment>
<comment type="subcellular location">
    <subcellularLocation>
        <location evidence="3 4">Mitochondrion inner membrane</location>
        <topology evidence="3 4">Peripheral membrane protein</topology>
    </subcellularLocation>
</comment>
<comment type="domain">
    <text evidence="7">The J-like region, although related to the J domain does not stimulate ATPase activity of mtHSP70. It nevertheless mediates the heterodimerization with the J domain of PAM18 and is therefore essential for PAM complex function.</text>
</comment>
<comment type="miscellaneous">
    <text evidence="2">Present with 3180 molecules/cell in log phase SD medium.</text>
</comment>
<comment type="similarity">
    <text evidence="9">Belongs to the TIM16/PAM16 family.</text>
</comment>
<reference key="1">
    <citation type="journal article" date="1995" name="Yeast">
        <title>A 37.5 kb region of yeast chromosome X includes the SME1, MEF2, GSH1 and CSD3 genes, a TCP-1-related gene, an open reading frame similar to the DAL80 gene, and a tRNA(Arg).</title>
        <authorList>
            <person name="Rasmussen S.W."/>
        </authorList>
    </citation>
    <scope>NUCLEOTIDE SEQUENCE [GENOMIC DNA]</scope>
    <source>
        <strain>ATCC 96604 / S288c / FY1679</strain>
    </source>
</reference>
<reference key="2">
    <citation type="journal article" date="1996" name="EMBO J.">
        <title>Complete nucleotide sequence of Saccharomyces cerevisiae chromosome X.</title>
        <authorList>
            <person name="Galibert F."/>
            <person name="Alexandraki D."/>
            <person name="Baur A."/>
            <person name="Boles E."/>
            <person name="Chalwatzis N."/>
            <person name="Chuat J.-C."/>
            <person name="Coster F."/>
            <person name="Cziepluch C."/>
            <person name="de Haan M."/>
            <person name="Domdey H."/>
            <person name="Durand P."/>
            <person name="Entian K.-D."/>
            <person name="Gatius M."/>
            <person name="Goffeau A."/>
            <person name="Grivell L.A."/>
            <person name="Hennemann A."/>
            <person name="Herbert C.J."/>
            <person name="Heumann K."/>
            <person name="Hilger F."/>
            <person name="Hollenberg C.P."/>
            <person name="Huang M.-E."/>
            <person name="Jacq C."/>
            <person name="Jauniaux J.-C."/>
            <person name="Katsoulou C."/>
            <person name="Kirchrath L."/>
            <person name="Kleine K."/>
            <person name="Kordes E."/>
            <person name="Koetter P."/>
            <person name="Liebl S."/>
            <person name="Louis E.J."/>
            <person name="Manus V."/>
            <person name="Mewes H.-W."/>
            <person name="Miosga T."/>
            <person name="Obermaier B."/>
            <person name="Perea J."/>
            <person name="Pohl T.M."/>
            <person name="Portetelle D."/>
            <person name="Pujol A."/>
            <person name="Purnelle B."/>
            <person name="Ramezani Rad M."/>
            <person name="Rasmussen S.W."/>
            <person name="Rose M."/>
            <person name="Rossau R."/>
            <person name="Schaaff-Gerstenschlaeger I."/>
            <person name="Smits P.H.M."/>
            <person name="Scarcez T."/>
            <person name="Soriano N."/>
            <person name="To Van D."/>
            <person name="Tzermia M."/>
            <person name="Van Broekhoven A."/>
            <person name="Vandenbol M."/>
            <person name="Wedler H."/>
            <person name="von Wettstein D."/>
            <person name="Wambutt R."/>
            <person name="Zagulski M."/>
            <person name="Zollner A."/>
            <person name="Karpfinger-Hartl L."/>
        </authorList>
    </citation>
    <scope>NUCLEOTIDE SEQUENCE [LARGE SCALE GENOMIC DNA]</scope>
    <source>
        <strain>ATCC 204508 / S288c</strain>
    </source>
</reference>
<reference key="3">
    <citation type="journal article" date="2014" name="G3 (Bethesda)">
        <title>The reference genome sequence of Saccharomyces cerevisiae: Then and now.</title>
        <authorList>
            <person name="Engel S.R."/>
            <person name="Dietrich F.S."/>
            <person name="Fisk D.G."/>
            <person name="Binkley G."/>
            <person name="Balakrishnan R."/>
            <person name="Costanzo M.C."/>
            <person name="Dwight S.S."/>
            <person name="Hitz B.C."/>
            <person name="Karra K."/>
            <person name="Nash R.S."/>
            <person name="Weng S."/>
            <person name="Wong E.D."/>
            <person name="Lloyd P."/>
            <person name="Skrzypek M.S."/>
            <person name="Miyasato S.R."/>
            <person name="Simison M."/>
            <person name="Cherry J.M."/>
        </authorList>
    </citation>
    <scope>GENOME REANNOTATION</scope>
    <source>
        <strain>ATCC 204508 / S288c</strain>
    </source>
</reference>
<reference key="4">
    <citation type="journal article" date="2007" name="Genome Res.">
        <title>Approaching a complete repository of sequence-verified protein-encoding clones for Saccharomyces cerevisiae.</title>
        <authorList>
            <person name="Hu Y."/>
            <person name="Rolfs A."/>
            <person name="Bhullar B."/>
            <person name="Murthy T.V.S."/>
            <person name="Zhu C."/>
            <person name="Berger M.F."/>
            <person name="Camargo A.A."/>
            <person name="Kelley F."/>
            <person name="McCarron S."/>
            <person name="Jepson D."/>
            <person name="Richardson A."/>
            <person name="Raphael J."/>
            <person name="Moreira D."/>
            <person name="Taycher E."/>
            <person name="Zuo D."/>
            <person name="Mohr S."/>
            <person name="Kane M.F."/>
            <person name="Williamson J."/>
            <person name="Simpson A.J.G."/>
            <person name="Bulyk M.L."/>
            <person name="Harlow E."/>
            <person name="Marsischky G."/>
            <person name="Kolodner R.D."/>
            <person name="LaBaer J."/>
        </authorList>
    </citation>
    <scope>NUCLEOTIDE SEQUENCE [GENOMIC DNA]</scope>
    <source>
        <strain>ATCC 204508 / S288c</strain>
    </source>
</reference>
<reference key="5">
    <citation type="journal article" date="2003" name="Nature">
        <title>Global analysis of protein expression in yeast.</title>
        <authorList>
            <person name="Ghaemmaghami S."/>
            <person name="Huh W.-K."/>
            <person name="Bower K."/>
            <person name="Howson R.W."/>
            <person name="Belle A."/>
            <person name="Dephoure N."/>
            <person name="O'Shea E.K."/>
            <person name="Weissman J.S."/>
        </authorList>
    </citation>
    <scope>LEVEL OF PROTEIN EXPRESSION [LARGE SCALE ANALYSIS]</scope>
</reference>
<reference key="6">
    <citation type="journal article" date="2004" name="J. Biol. Chem.">
        <title>The presequence translocase-associated protein import motor of mitochondria. Pam16 functions in an antagonistic manner to Pam18.</title>
        <authorList>
            <person name="Li Y."/>
            <person name="Dudek J."/>
            <person name="Guiard B."/>
            <person name="Pfanner N."/>
            <person name="Rehling P."/>
            <person name="Voos W."/>
        </authorList>
    </citation>
    <scope>FUNCTION</scope>
    <scope>INTERACTION WITH PAM18</scope>
    <scope>MUTAGENESIS OF 88-ASP--GLU-90</scope>
</reference>
<reference key="7">
    <citation type="journal article" date="2004" name="Nat. Struct. Mol. Biol.">
        <title>Pam16 has an essential role in the mitochondrial protein import motor.</title>
        <authorList>
            <person name="Frazier A.E."/>
            <person name="Dudek J."/>
            <person name="Guiard B."/>
            <person name="Voos W."/>
            <person name="Li Y."/>
            <person name="Lind M."/>
            <person name="Meisinger C."/>
            <person name="Geissler A."/>
            <person name="Sickmann A."/>
            <person name="Meyer H.E."/>
            <person name="Bilanchone V."/>
            <person name="Cumsky M.G."/>
            <person name="Truscott K.N."/>
            <person name="Pfanner N."/>
            <person name="Rehling P."/>
        </authorList>
    </citation>
    <scope>IDENTIFICATION BY MASS SPECTROMETRY</scope>
    <scope>IDENTIFICATION IN THE PAM COMPLEX</scope>
    <scope>FUNCTION</scope>
    <scope>SUBCELLULAR LOCATION</scope>
    <scope>INTERACTION WITH PAM18</scope>
</reference>
<reference key="8">
    <citation type="journal article" date="2004" name="Nat. Struct. Mol. Biol.">
        <title>The J domain-related cochaperone Tim16 is a constituent of the mitochondrial TIM23 preprotein translocase.</title>
        <authorList>
            <person name="Kozany C."/>
            <person name="Mokranjac D."/>
            <person name="Sichting M."/>
            <person name="Neupert W."/>
            <person name="Hell K."/>
        </authorList>
    </citation>
    <scope>IDENTIFICATION BY MASS SPECTROMETRY</scope>
    <scope>IDENTIFICATION IN THE PAM COMPLEX</scope>
    <scope>FUNCTION</scope>
    <scope>SUBCELLULAR LOCATION</scope>
</reference>
<reference key="9">
    <citation type="journal article" date="2005" name="J. Biol. Chem.">
        <title>The import motor of the yeast mitochondrial TIM23 preprotein translocase contains two different J proteins, Tim14 and Mdj2.</title>
        <authorList>
            <person name="Mokranjac D."/>
            <person name="Sichting M."/>
            <person name="Popov-Celeketic D."/>
            <person name="Berg A."/>
            <person name="Hell K."/>
            <person name="Neupert W."/>
        </authorList>
    </citation>
    <scope>INTERACTION WITH MDJ2</scope>
</reference>
<reference key="10">
    <citation type="journal article" date="2005" name="Mol. Cell. Biol.">
        <title>Pam17 is required for architecture and translocation activity of the mitochondrial protein import motor.</title>
        <authorList>
            <person name="van der Laan M."/>
            <person name="Chacinska A."/>
            <person name="Lind M."/>
            <person name="Perschil I."/>
            <person name="Sickmann A."/>
            <person name="Meyer H.E."/>
            <person name="Guiard B."/>
            <person name="Meisinger C."/>
            <person name="Pfanner N."/>
            <person name="Rehling P."/>
        </authorList>
    </citation>
    <scope>IDENTIFICATION IN THE PAM COMPLEX WITH PAM17; PAM18; TIM44; SSC1 AND MGE1</scope>
</reference>
<reference key="11">
    <citation type="journal article" date="2005" name="Proc. Natl. Acad. Sci. U.S.A.">
        <title>Role of Pam16's degenerate J domain in protein import across the mitochondrial inner membrane.</title>
        <authorList>
            <person name="D'Silva P.R."/>
            <person name="Schilke B."/>
            <person name="Walter W."/>
            <person name="Craig E.A."/>
        </authorList>
    </citation>
    <scope>SUBUNIT</scope>
    <scope>DOMAIN J</scope>
    <scope>INTERACTION WITH PAM18</scope>
</reference>
<gene>
    <name type="primary">PAM16</name>
    <name type="synonym">TIM16</name>
    <name type="ordered locus">YJL104W</name>
    <name type="ORF">J0822</name>
</gene>
<accession>P42949</accession>
<accession>D6VW80</accession>
<accession>Q6B2X3</accession>
<dbReference type="EMBL" id="X85021">
    <property type="protein sequence ID" value="CAA59390.1"/>
    <property type="molecule type" value="Genomic_DNA"/>
</dbReference>
<dbReference type="EMBL" id="Z49379">
    <property type="protein sequence ID" value="CAA89399.1"/>
    <property type="molecule type" value="Genomic_DNA"/>
</dbReference>
<dbReference type="EMBL" id="AY692607">
    <property type="protein sequence ID" value="AAT92626.1"/>
    <property type="molecule type" value="Genomic_DNA"/>
</dbReference>
<dbReference type="EMBL" id="BK006943">
    <property type="protein sequence ID" value="DAA08696.1"/>
    <property type="molecule type" value="Genomic_DNA"/>
</dbReference>
<dbReference type="PIR" id="S53383">
    <property type="entry name" value="S53383"/>
</dbReference>
<dbReference type="RefSeq" id="NP_012431.1">
    <property type="nucleotide sequence ID" value="NM_001181537.1"/>
</dbReference>
<dbReference type="PDB" id="2GUZ">
    <property type="method" value="X-ray"/>
    <property type="resolution" value="2.00 A"/>
    <property type="chains" value="B/D/F/H/J/L/N/P=54-117"/>
</dbReference>
<dbReference type="PDBsum" id="2GUZ"/>
<dbReference type="SMR" id="P42949"/>
<dbReference type="BioGRID" id="33652">
    <property type="interactions" value="456"/>
</dbReference>
<dbReference type="ComplexPortal" id="CPX-539">
    <property type="entry name" value="TIM23 mitochondrial inner membrane pre-sequence translocase complex, motor variant"/>
</dbReference>
<dbReference type="FunCoup" id="P42949">
    <property type="interactions" value="323"/>
</dbReference>
<dbReference type="IntAct" id="P42949">
    <property type="interactions" value="10"/>
</dbReference>
<dbReference type="MINT" id="P42949"/>
<dbReference type="STRING" id="4932.YJL104W"/>
<dbReference type="TCDB" id="3.A.8.1.1">
    <property type="family name" value="the mitochondrial protein translocase (mpt) family"/>
</dbReference>
<dbReference type="iPTMnet" id="P42949"/>
<dbReference type="PaxDb" id="4932-YJL104W"/>
<dbReference type="PeptideAtlas" id="P42949"/>
<dbReference type="EnsemblFungi" id="YJL104W_mRNA">
    <property type="protein sequence ID" value="YJL104W"/>
    <property type="gene ID" value="YJL104W"/>
</dbReference>
<dbReference type="GeneID" id="853340"/>
<dbReference type="KEGG" id="sce:YJL104W"/>
<dbReference type="AGR" id="SGD:S000003640"/>
<dbReference type="SGD" id="S000003640">
    <property type="gene designation" value="PAM16"/>
</dbReference>
<dbReference type="VEuPathDB" id="FungiDB:YJL104W"/>
<dbReference type="eggNOG" id="KOG3442">
    <property type="taxonomic scope" value="Eukaryota"/>
</dbReference>
<dbReference type="GeneTree" id="ENSGT00390000012037"/>
<dbReference type="HOGENOM" id="CLU_101461_0_1_1"/>
<dbReference type="InParanoid" id="P42949"/>
<dbReference type="OMA" id="RMFKIND"/>
<dbReference type="OrthoDB" id="10262892at2759"/>
<dbReference type="BioCyc" id="YEAST:G3O-31558-MONOMER"/>
<dbReference type="BioGRID-ORCS" id="853340">
    <property type="hits" value="0 hits in 10 CRISPR screens"/>
</dbReference>
<dbReference type="EvolutionaryTrace" id="P42949"/>
<dbReference type="PRO" id="PR:P42949"/>
<dbReference type="Proteomes" id="UP000002311">
    <property type="component" value="Chromosome X"/>
</dbReference>
<dbReference type="RNAct" id="P42949">
    <property type="molecule type" value="protein"/>
</dbReference>
<dbReference type="GO" id="GO:0005743">
    <property type="term" value="C:mitochondrial inner membrane"/>
    <property type="evidence" value="ECO:0000304"/>
    <property type="project" value="Reactome"/>
</dbReference>
<dbReference type="GO" id="GO:0005739">
    <property type="term" value="C:mitochondrion"/>
    <property type="evidence" value="ECO:0007005"/>
    <property type="project" value="SGD"/>
</dbReference>
<dbReference type="GO" id="GO:0001405">
    <property type="term" value="C:PAM complex, Tim23 associated import motor"/>
    <property type="evidence" value="ECO:0000314"/>
    <property type="project" value="SGD"/>
</dbReference>
<dbReference type="GO" id="GO:0005744">
    <property type="term" value="C:TIM23 mitochondrial import inner membrane translocase complex"/>
    <property type="evidence" value="ECO:0000314"/>
    <property type="project" value="SGD"/>
</dbReference>
<dbReference type="GO" id="GO:0019904">
    <property type="term" value="F:protein domain specific binding"/>
    <property type="evidence" value="ECO:0000314"/>
    <property type="project" value="SGD"/>
</dbReference>
<dbReference type="GO" id="GO:0006886">
    <property type="term" value="P:intracellular protein transport"/>
    <property type="evidence" value="ECO:0000303"/>
    <property type="project" value="ComplexPortal"/>
</dbReference>
<dbReference type="GO" id="GO:0030150">
    <property type="term" value="P:protein import into mitochondrial matrix"/>
    <property type="evidence" value="ECO:0000315"/>
    <property type="project" value="SGD"/>
</dbReference>
<dbReference type="FunFam" id="1.10.287.110:FF:000006">
    <property type="entry name" value="Import inner membrane translocase subunit TIM16"/>
    <property type="match status" value="1"/>
</dbReference>
<dbReference type="Gene3D" id="1.10.287.110">
    <property type="entry name" value="DnaJ domain"/>
    <property type="match status" value="1"/>
</dbReference>
<dbReference type="InterPro" id="IPR036869">
    <property type="entry name" value="J_dom_sf"/>
</dbReference>
<dbReference type="InterPro" id="IPR005341">
    <property type="entry name" value="Tim16"/>
</dbReference>
<dbReference type="PANTHER" id="PTHR12388">
    <property type="entry name" value="MITOCHONDRIA ASSOCIATED GRANULOCYTE MACROPHAGE CSF SIGNALING MOLECULE"/>
    <property type="match status" value="1"/>
</dbReference>
<dbReference type="PANTHER" id="PTHR12388:SF0">
    <property type="entry name" value="MITOCHONDRIAL IMPORT INNER MEMBRANE TRANSLOCASE SUBUNIT TIM16"/>
    <property type="match status" value="1"/>
</dbReference>
<dbReference type="Pfam" id="PF03656">
    <property type="entry name" value="Pam16"/>
    <property type="match status" value="1"/>
</dbReference>
<evidence type="ECO:0000256" key="1">
    <source>
        <dbReference type="SAM" id="MobiDB-lite"/>
    </source>
</evidence>
<evidence type="ECO:0000269" key="2">
    <source>
    </source>
</evidence>
<evidence type="ECO:0000269" key="3">
    <source>
    </source>
</evidence>
<evidence type="ECO:0000269" key="4">
    <source>
    </source>
</evidence>
<evidence type="ECO:0000269" key="5">
    <source>
    </source>
</evidence>
<evidence type="ECO:0000269" key="6">
    <source>
    </source>
</evidence>
<evidence type="ECO:0000269" key="7">
    <source>
    </source>
</evidence>
<evidence type="ECO:0000269" key="8">
    <source>
    </source>
</evidence>
<evidence type="ECO:0000305" key="9"/>
<evidence type="ECO:0007829" key="10">
    <source>
        <dbReference type="PDB" id="2GUZ"/>
    </source>
</evidence>
<organism>
    <name type="scientific">Saccharomyces cerevisiae (strain ATCC 204508 / S288c)</name>
    <name type="common">Baker's yeast</name>
    <dbReference type="NCBI Taxonomy" id="559292"/>
    <lineage>
        <taxon>Eukaryota</taxon>
        <taxon>Fungi</taxon>
        <taxon>Dikarya</taxon>
        <taxon>Ascomycota</taxon>
        <taxon>Saccharomycotina</taxon>
        <taxon>Saccharomycetes</taxon>
        <taxon>Saccharomycetales</taxon>
        <taxon>Saccharomycetaceae</taxon>
        <taxon>Saccharomyces</taxon>
    </lineage>
</organism>
<proteinExistence type="evidence at protein level"/>
<name>TIM16_YEAST</name>
<keyword id="KW-0002">3D-structure</keyword>
<keyword id="KW-0472">Membrane</keyword>
<keyword id="KW-0496">Mitochondrion</keyword>
<keyword id="KW-0999">Mitochondrion inner membrane</keyword>
<keyword id="KW-0653">Protein transport</keyword>
<keyword id="KW-1185">Reference proteome</keyword>
<keyword id="KW-0811">Translocation</keyword>
<keyword id="KW-0813">Transport</keyword>
<protein>
    <recommendedName>
        <fullName>Mitochondrial import inner membrane translocase subunit TIM16</fullName>
    </recommendedName>
    <alternativeName>
        <fullName>Presequence translocated-associated motor subunit PAM16</fullName>
    </alternativeName>
</protein>
<feature type="chain" id="PRO_0000214098" description="Mitochondrial import inner membrane translocase subunit TIM16">
    <location>
        <begin position="1"/>
        <end position="149"/>
    </location>
</feature>
<feature type="region of interest" description="J-like">
    <location>
        <begin position="57"/>
        <end position="113"/>
    </location>
</feature>
<feature type="region of interest" description="Disordered" evidence="1">
    <location>
        <begin position="115"/>
        <end position="149"/>
    </location>
</feature>
<feature type="compositionally biased region" description="Low complexity" evidence="1">
    <location>
        <begin position="135"/>
        <end position="149"/>
    </location>
</feature>
<feature type="mutagenesis site" description="Does not confer ability to stimulate the ATPase activity of mtHSP70." evidence="5">
    <original>DKE</original>
    <variation>HPD</variation>
    <location>
        <begin position="88"/>
        <end position="90"/>
    </location>
</feature>
<feature type="sequence conflict" description="In Ref. 4; AAT92626." evidence="9" ref="4">
    <original>Q</original>
    <variation>H</variation>
    <location>
        <position position="114"/>
    </location>
</feature>
<feature type="helix" evidence="10">
    <location>
        <begin position="55"/>
        <end position="61"/>
    </location>
</feature>
<feature type="helix" evidence="10">
    <location>
        <begin position="66"/>
        <end position="68"/>
    </location>
</feature>
<feature type="helix" evidence="10">
    <location>
        <begin position="73"/>
        <end position="86"/>
    </location>
</feature>
<feature type="helix" evidence="10">
    <location>
        <begin position="89"/>
        <end position="91"/>
    </location>
</feature>
<feature type="helix" evidence="10">
    <location>
        <begin position="95"/>
        <end position="116"/>
    </location>
</feature>
<sequence>MAHRAFIQVIITGTQVFGKAFAEAYRQAASQSVKQGATNASRRGTGKGEYGGITLDESCKILNIEESKGDLNMDKINNRFNYLFEVNDKEKGGSFYLQSKVYRAAERLKWELAQREKNAKAKAGDASTAKPPPNSTNSSGADNSASSNQ</sequence>